<proteinExistence type="inferred from homology"/>
<name>RNH2_AGRFC</name>
<sequence length="217" mass="23134">MKRTATPDSPALFDLVDTGPDFAFELEAKKKGFWPVAGTDEAGRGPLAGPVVAAAVILDPDNIPKGMDDSKKLTRQKRESLFVQIMETSIVSVASSGPGLIDSVNILRASLDAMRRAVLGLEIPPALVLADGRDRPPGIPCEAKAVIKGDSRSLSIAAASIIAKVTRDRMMERAGVVHTSYGFEGHAGYGTPAHLRAIESHGPCALHRMSFRPLKRD</sequence>
<reference key="1">
    <citation type="journal article" date="2001" name="Science">
        <title>The genome of the natural genetic engineer Agrobacterium tumefaciens C58.</title>
        <authorList>
            <person name="Wood D.W."/>
            <person name="Setubal J.C."/>
            <person name="Kaul R."/>
            <person name="Monks D.E."/>
            <person name="Kitajima J.P."/>
            <person name="Okura V.K."/>
            <person name="Zhou Y."/>
            <person name="Chen L."/>
            <person name="Wood G.E."/>
            <person name="Almeida N.F. Jr."/>
            <person name="Woo L."/>
            <person name="Chen Y."/>
            <person name="Paulsen I.T."/>
            <person name="Eisen J.A."/>
            <person name="Karp P.D."/>
            <person name="Bovee D. Sr."/>
            <person name="Chapman P."/>
            <person name="Clendenning J."/>
            <person name="Deatherage G."/>
            <person name="Gillet W."/>
            <person name="Grant C."/>
            <person name="Kutyavin T."/>
            <person name="Levy R."/>
            <person name="Li M.-J."/>
            <person name="McClelland E."/>
            <person name="Palmieri A."/>
            <person name="Raymond C."/>
            <person name="Rouse G."/>
            <person name="Saenphimmachak C."/>
            <person name="Wu Z."/>
            <person name="Romero P."/>
            <person name="Gordon D."/>
            <person name="Zhang S."/>
            <person name="Yoo H."/>
            <person name="Tao Y."/>
            <person name="Biddle P."/>
            <person name="Jung M."/>
            <person name="Krespan W."/>
            <person name="Perry M."/>
            <person name="Gordon-Kamm B."/>
            <person name="Liao L."/>
            <person name="Kim S."/>
            <person name="Hendrick C."/>
            <person name="Zhao Z.-Y."/>
            <person name="Dolan M."/>
            <person name="Chumley F."/>
            <person name="Tingey S.V."/>
            <person name="Tomb J.-F."/>
            <person name="Gordon M.P."/>
            <person name="Olson M.V."/>
            <person name="Nester E.W."/>
        </authorList>
    </citation>
    <scope>NUCLEOTIDE SEQUENCE [LARGE SCALE GENOMIC DNA]</scope>
    <source>
        <strain>C58 / ATCC 33970</strain>
    </source>
</reference>
<reference key="2">
    <citation type="journal article" date="2001" name="Science">
        <title>Genome sequence of the plant pathogen and biotechnology agent Agrobacterium tumefaciens C58.</title>
        <authorList>
            <person name="Goodner B."/>
            <person name="Hinkle G."/>
            <person name="Gattung S."/>
            <person name="Miller N."/>
            <person name="Blanchard M."/>
            <person name="Qurollo B."/>
            <person name="Goldman B.S."/>
            <person name="Cao Y."/>
            <person name="Askenazi M."/>
            <person name="Halling C."/>
            <person name="Mullin L."/>
            <person name="Houmiel K."/>
            <person name="Gordon J."/>
            <person name="Vaudin M."/>
            <person name="Iartchouk O."/>
            <person name="Epp A."/>
            <person name="Liu F."/>
            <person name="Wollam C."/>
            <person name="Allinger M."/>
            <person name="Doughty D."/>
            <person name="Scott C."/>
            <person name="Lappas C."/>
            <person name="Markelz B."/>
            <person name="Flanagan C."/>
            <person name="Crowell C."/>
            <person name="Gurson J."/>
            <person name="Lomo C."/>
            <person name="Sear C."/>
            <person name="Strub G."/>
            <person name="Cielo C."/>
            <person name="Slater S."/>
        </authorList>
    </citation>
    <scope>NUCLEOTIDE SEQUENCE [LARGE SCALE GENOMIC DNA]</scope>
    <source>
        <strain>C58 / ATCC 33970</strain>
    </source>
</reference>
<organism>
    <name type="scientific">Agrobacterium fabrum (strain C58 / ATCC 33970)</name>
    <name type="common">Agrobacterium tumefaciens (strain C58)</name>
    <dbReference type="NCBI Taxonomy" id="176299"/>
    <lineage>
        <taxon>Bacteria</taxon>
        <taxon>Pseudomonadati</taxon>
        <taxon>Pseudomonadota</taxon>
        <taxon>Alphaproteobacteria</taxon>
        <taxon>Hyphomicrobiales</taxon>
        <taxon>Rhizobiaceae</taxon>
        <taxon>Rhizobium/Agrobacterium group</taxon>
        <taxon>Agrobacterium</taxon>
        <taxon>Agrobacterium tumefaciens complex</taxon>
    </lineage>
</organism>
<feature type="chain" id="PRO_0000111532" description="Ribonuclease HII">
    <location>
        <begin position="1"/>
        <end position="217"/>
    </location>
</feature>
<feature type="domain" description="RNase H type-2" evidence="2">
    <location>
        <begin position="34"/>
        <end position="217"/>
    </location>
</feature>
<feature type="binding site" evidence="1">
    <location>
        <position position="40"/>
    </location>
    <ligand>
        <name>a divalent metal cation</name>
        <dbReference type="ChEBI" id="CHEBI:60240"/>
    </ligand>
</feature>
<feature type="binding site" evidence="1">
    <location>
        <position position="41"/>
    </location>
    <ligand>
        <name>a divalent metal cation</name>
        <dbReference type="ChEBI" id="CHEBI:60240"/>
    </ligand>
</feature>
<feature type="binding site" evidence="1">
    <location>
        <position position="131"/>
    </location>
    <ligand>
        <name>a divalent metal cation</name>
        <dbReference type="ChEBI" id="CHEBI:60240"/>
    </ligand>
</feature>
<keyword id="KW-0963">Cytoplasm</keyword>
<keyword id="KW-0255">Endonuclease</keyword>
<keyword id="KW-0378">Hydrolase</keyword>
<keyword id="KW-0464">Manganese</keyword>
<keyword id="KW-0479">Metal-binding</keyword>
<keyword id="KW-0540">Nuclease</keyword>
<keyword id="KW-1185">Reference proteome</keyword>
<evidence type="ECO:0000255" key="1">
    <source>
        <dbReference type="HAMAP-Rule" id="MF_00052"/>
    </source>
</evidence>
<evidence type="ECO:0000255" key="2">
    <source>
        <dbReference type="PROSITE-ProRule" id="PRU01319"/>
    </source>
</evidence>
<protein>
    <recommendedName>
        <fullName evidence="1">Ribonuclease HII</fullName>
        <shortName evidence="1">RNase HII</shortName>
        <ecNumber evidence="1">3.1.26.4</ecNumber>
    </recommendedName>
</protein>
<accession>Q8UHG2</accession>
<comment type="function">
    <text evidence="1">Endonuclease that specifically degrades the RNA of RNA-DNA hybrids.</text>
</comment>
<comment type="catalytic activity">
    <reaction evidence="1">
        <text>Endonucleolytic cleavage to 5'-phosphomonoester.</text>
        <dbReference type="EC" id="3.1.26.4"/>
    </reaction>
</comment>
<comment type="cofactor">
    <cofactor evidence="1">
        <name>Mn(2+)</name>
        <dbReference type="ChEBI" id="CHEBI:29035"/>
    </cofactor>
    <cofactor evidence="1">
        <name>Mg(2+)</name>
        <dbReference type="ChEBI" id="CHEBI:18420"/>
    </cofactor>
    <text evidence="1">Manganese or magnesium. Binds 1 divalent metal ion per monomer in the absence of substrate. May bind a second metal ion after substrate binding.</text>
</comment>
<comment type="subcellular location">
    <subcellularLocation>
        <location evidence="1">Cytoplasm</location>
    </subcellularLocation>
</comment>
<comment type="similarity">
    <text evidence="1">Belongs to the RNase HII family.</text>
</comment>
<dbReference type="EC" id="3.1.26.4" evidence="1"/>
<dbReference type="EMBL" id="AE007869">
    <property type="protein sequence ID" value="AAK86530.2"/>
    <property type="molecule type" value="Genomic_DNA"/>
</dbReference>
<dbReference type="PIR" id="A97447">
    <property type="entry name" value="A97447"/>
</dbReference>
<dbReference type="PIR" id="AB2665">
    <property type="entry name" value="AB2665"/>
</dbReference>
<dbReference type="RefSeq" id="NP_353745.2">
    <property type="nucleotide sequence ID" value="NC_003062.2"/>
</dbReference>
<dbReference type="RefSeq" id="WP_010971095.1">
    <property type="nucleotide sequence ID" value="NC_003062.2"/>
</dbReference>
<dbReference type="SMR" id="Q8UHG2"/>
<dbReference type="STRING" id="176299.Atu0720"/>
<dbReference type="EnsemblBacteria" id="AAK86530">
    <property type="protein sequence ID" value="AAK86530"/>
    <property type="gene ID" value="Atu0720"/>
</dbReference>
<dbReference type="GeneID" id="1132758"/>
<dbReference type="KEGG" id="atu:Atu0720"/>
<dbReference type="PATRIC" id="fig|176299.10.peg.718"/>
<dbReference type="eggNOG" id="COG0164">
    <property type="taxonomic scope" value="Bacteria"/>
</dbReference>
<dbReference type="HOGENOM" id="CLU_036532_3_2_5"/>
<dbReference type="OrthoDB" id="9803420at2"/>
<dbReference type="PhylomeDB" id="Q8UHG2"/>
<dbReference type="BioCyc" id="AGRO:ATU0720-MONOMER"/>
<dbReference type="Proteomes" id="UP000000813">
    <property type="component" value="Chromosome circular"/>
</dbReference>
<dbReference type="GO" id="GO:0005737">
    <property type="term" value="C:cytoplasm"/>
    <property type="evidence" value="ECO:0007669"/>
    <property type="project" value="UniProtKB-SubCell"/>
</dbReference>
<dbReference type="GO" id="GO:0032299">
    <property type="term" value="C:ribonuclease H2 complex"/>
    <property type="evidence" value="ECO:0007669"/>
    <property type="project" value="TreeGrafter"/>
</dbReference>
<dbReference type="GO" id="GO:0030145">
    <property type="term" value="F:manganese ion binding"/>
    <property type="evidence" value="ECO:0007669"/>
    <property type="project" value="UniProtKB-UniRule"/>
</dbReference>
<dbReference type="GO" id="GO:0003723">
    <property type="term" value="F:RNA binding"/>
    <property type="evidence" value="ECO:0007669"/>
    <property type="project" value="InterPro"/>
</dbReference>
<dbReference type="GO" id="GO:0004523">
    <property type="term" value="F:RNA-DNA hybrid ribonuclease activity"/>
    <property type="evidence" value="ECO:0007669"/>
    <property type="project" value="UniProtKB-UniRule"/>
</dbReference>
<dbReference type="GO" id="GO:0043137">
    <property type="term" value="P:DNA replication, removal of RNA primer"/>
    <property type="evidence" value="ECO:0007669"/>
    <property type="project" value="TreeGrafter"/>
</dbReference>
<dbReference type="GO" id="GO:0006298">
    <property type="term" value="P:mismatch repair"/>
    <property type="evidence" value="ECO:0007669"/>
    <property type="project" value="TreeGrafter"/>
</dbReference>
<dbReference type="CDD" id="cd07182">
    <property type="entry name" value="RNase_HII_bacteria_HII_like"/>
    <property type="match status" value="1"/>
</dbReference>
<dbReference type="Gene3D" id="3.30.420.10">
    <property type="entry name" value="Ribonuclease H-like superfamily/Ribonuclease H"/>
    <property type="match status" value="1"/>
</dbReference>
<dbReference type="HAMAP" id="MF_00052_B">
    <property type="entry name" value="RNase_HII_B"/>
    <property type="match status" value="1"/>
</dbReference>
<dbReference type="InterPro" id="IPR022898">
    <property type="entry name" value="RNase_HII"/>
</dbReference>
<dbReference type="InterPro" id="IPR001352">
    <property type="entry name" value="RNase_HII/HIII"/>
</dbReference>
<dbReference type="InterPro" id="IPR024567">
    <property type="entry name" value="RNase_HII/HIII_dom"/>
</dbReference>
<dbReference type="InterPro" id="IPR012337">
    <property type="entry name" value="RNaseH-like_sf"/>
</dbReference>
<dbReference type="InterPro" id="IPR036397">
    <property type="entry name" value="RNaseH_sf"/>
</dbReference>
<dbReference type="NCBIfam" id="NF000595">
    <property type="entry name" value="PRK00015.1-3"/>
    <property type="match status" value="1"/>
</dbReference>
<dbReference type="PANTHER" id="PTHR10954">
    <property type="entry name" value="RIBONUCLEASE H2 SUBUNIT A"/>
    <property type="match status" value="1"/>
</dbReference>
<dbReference type="PANTHER" id="PTHR10954:SF18">
    <property type="entry name" value="RIBONUCLEASE HII"/>
    <property type="match status" value="1"/>
</dbReference>
<dbReference type="Pfam" id="PF01351">
    <property type="entry name" value="RNase_HII"/>
    <property type="match status" value="1"/>
</dbReference>
<dbReference type="SUPFAM" id="SSF53098">
    <property type="entry name" value="Ribonuclease H-like"/>
    <property type="match status" value="1"/>
</dbReference>
<dbReference type="PROSITE" id="PS51975">
    <property type="entry name" value="RNASE_H_2"/>
    <property type="match status" value="1"/>
</dbReference>
<gene>
    <name evidence="1" type="primary">rnhB</name>
    <name type="ordered locus">Atu0720</name>
    <name type="ORF">AGR_C_1307</name>
</gene>